<feature type="chain" id="PRO_1000097584" description="3-dehydroquinate dehydratase">
    <location>
        <begin position="1"/>
        <end position="149"/>
    </location>
</feature>
<feature type="active site" description="Proton acceptor" evidence="1">
    <location>
        <position position="25"/>
    </location>
</feature>
<feature type="active site" description="Proton donor" evidence="1">
    <location>
        <position position="102"/>
    </location>
</feature>
<feature type="binding site" evidence="1">
    <location>
        <position position="76"/>
    </location>
    <ligand>
        <name>substrate</name>
    </ligand>
</feature>
<feature type="binding site" evidence="1">
    <location>
        <position position="82"/>
    </location>
    <ligand>
        <name>substrate</name>
    </ligand>
</feature>
<feature type="binding site" evidence="1">
    <location>
        <position position="89"/>
    </location>
    <ligand>
        <name>substrate</name>
    </ligand>
</feature>
<feature type="binding site" evidence="1">
    <location>
        <begin position="103"/>
        <end position="104"/>
    </location>
    <ligand>
        <name>substrate</name>
    </ligand>
</feature>
<feature type="binding site" evidence="1">
    <location>
        <position position="113"/>
    </location>
    <ligand>
        <name>substrate</name>
    </ligand>
</feature>
<feature type="site" description="Transition state stabilizer" evidence="1">
    <location>
        <position position="20"/>
    </location>
</feature>
<protein>
    <recommendedName>
        <fullName evidence="1">3-dehydroquinate dehydratase</fullName>
        <shortName evidence="1">3-dehydroquinase</shortName>
        <ecNumber evidence="1">4.2.1.10</ecNumber>
    </recommendedName>
    <alternativeName>
        <fullName evidence="1">Type II DHQase</fullName>
    </alternativeName>
</protein>
<evidence type="ECO:0000255" key="1">
    <source>
        <dbReference type="HAMAP-Rule" id="MF_00169"/>
    </source>
</evidence>
<keyword id="KW-0028">Amino-acid biosynthesis</keyword>
<keyword id="KW-0057">Aromatic amino acid biosynthesis</keyword>
<keyword id="KW-0456">Lyase</keyword>
<keyword id="KW-1185">Reference proteome</keyword>
<comment type="function">
    <text evidence="1">Catalyzes a trans-dehydration via an enolate intermediate.</text>
</comment>
<comment type="catalytic activity">
    <reaction evidence="1">
        <text>3-dehydroquinate = 3-dehydroshikimate + H2O</text>
        <dbReference type="Rhea" id="RHEA:21096"/>
        <dbReference type="ChEBI" id="CHEBI:15377"/>
        <dbReference type="ChEBI" id="CHEBI:16630"/>
        <dbReference type="ChEBI" id="CHEBI:32364"/>
        <dbReference type="EC" id="4.2.1.10"/>
    </reaction>
</comment>
<comment type="pathway">
    <text evidence="1">Metabolic intermediate biosynthesis; chorismate biosynthesis; chorismate from D-erythrose 4-phosphate and phosphoenolpyruvate: step 3/7.</text>
</comment>
<comment type="subunit">
    <text evidence="1">Homododecamer.</text>
</comment>
<comment type="similarity">
    <text evidence="1">Belongs to the type-II 3-dehydroquinase family.</text>
</comment>
<proteinExistence type="inferred from homology"/>
<name>AROQ_ACAM1</name>
<organism>
    <name type="scientific">Acaryochloris marina (strain MBIC 11017)</name>
    <dbReference type="NCBI Taxonomy" id="329726"/>
    <lineage>
        <taxon>Bacteria</taxon>
        <taxon>Bacillati</taxon>
        <taxon>Cyanobacteriota</taxon>
        <taxon>Cyanophyceae</taxon>
        <taxon>Acaryochloridales</taxon>
        <taxon>Acaryochloridaceae</taxon>
        <taxon>Acaryochloris</taxon>
    </lineage>
</organism>
<sequence length="149" mass="16261">MSRPSILVLHGPNLNLLGQREPGIYGSVTLEKINQQLLSLAESLKCNIEFYQSNHEGNLVDSIQEALGCHNGILINAAAYTHTSVAIRDALAAVAIPAVEVHLSNIYRREDFRHHSFIAPIVIGQISGFGAQSYSLGLQALIHHLQTQT</sequence>
<dbReference type="EC" id="4.2.1.10" evidence="1"/>
<dbReference type="EMBL" id="CP000828">
    <property type="protein sequence ID" value="ABW26960.1"/>
    <property type="molecule type" value="Genomic_DNA"/>
</dbReference>
<dbReference type="RefSeq" id="WP_012162458.1">
    <property type="nucleotide sequence ID" value="NC_009925.1"/>
</dbReference>
<dbReference type="SMR" id="B0CEJ4"/>
<dbReference type="STRING" id="329726.AM1_1943"/>
<dbReference type="KEGG" id="amr:AM1_1943"/>
<dbReference type="eggNOG" id="COG0757">
    <property type="taxonomic scope" value="Bacteria"/>
</dbReference>
<dbReference type="HOGENOM" id="CLU_090968_1_0_3"/>
<dbReference type="OrthoDB" id="9790793at2"/>
<dbReference type="UniPathway" id="UPA00053">
    <property type="reaction ID" value="UER00086"/>
</dbReference>
<dbReference type="Proteomes" id="UP000000268">
    <property type="component" value="Chromosome"/>
</dbReference>
<dbReference type="GO" id="GO:0003855">
    <property type="term" value="F:3-dehydroquinate dehydratase activity"/>
    <property type="evidence" value="ECO:0007669"/>
    <property type="project" value="UniProtKB-UniRule"/>
</dbReference>
<dbReference type="GO" id="GO:0008652">
    <property type="term" value="P:amino acid biosynthetic process"/>
    <property type="evidence" value="ECO:0007669"/>
    <property type="project" value="UniProtKB-KW"/>
</dbReference>
<dbReference type="GO" id="GO:0009073">
    <property type="term" value="P:aromatic amino acid family biosynthetic process"/>
    <property type="evidence" value="ECO:0007669"/>
    <property type="project" value="UniProtKB-KW"/>
</dbReference>
<dbReference type="GO" id="GO:0009423">
    <property type="term" value="P:chorismate biosynthetic process"/>
    <property type="evidence" value="ECO:0007669"/>
    <property type="project" value="UniProtKB-UniRule"/>
</dbReference>
<dbReference type="GO" id="GO:0019631">
    <property type="term" value="P:quinate catabolic process"/>
    <property type="evidence" value="ECO:0007669"/>
    <property type="project" value="TreeGrafter"/>
</dbReference>
<dbReference type="CDD" id="cd00466">
    <property type="entry name" value="DHQase_II"/>
    <property type="match status" value="1"/>
</dbReference>
<dbReference type="Gene3D" id="3.40.50.9100">
    <property type="entry name" value="Dehydroquinase, class II"/>
    <property type="match status" value="1"/>
</dbReference>
<dbReference type="HAMAP" id="MF_00169">
    <property type="entry name" value="AroQ"/>
    <property type="match status" value="1"/>
</dbReference>
<dbReference type="InterPro" id="IPR001874">
    <property type="entry name" value="DHquinase_II"/>
</dbReference>
<dbReference type="InterPro" id="IPR018509">
    <property type="entry name" value="DHquinase_II_CS"/>
</dbReference>
<dbReference type="InterPro" id="IPR036441">
    <property type="entry name" value="DHquinase_II_sf"/>
</dbReference>
<dbReference type="NCBIfam" id="TIGR01088">
    <property type="entry name" value="aroQ"/>
    <property type="match status" value="1"/>
</dbReference>
<dbReference type="NCBIfam" id="NF003804">
    <property type="entry name" value="PRK05395.1-1"/>
    <property type="match status" value="1"/>
</dbReference>
<dbReference type="NCBIfam" id="NF003805">
    <property type="entry name" value="PRK05395.1-2"/>
    <property type="match status" value="1"/>
</dbReference>
<dbReference type="NCBIfam" id="NF003806">
    <property type="entry name" value="PRK05395.1-3"/>
    <property type="match status" value="1"/>
</dbReference>
<dbReference type="NCBIfam" id="NF003807">
    <property type="entry name" value="PRK05395.1-4"/>
    <property type="match status" value="1"/>
</dbReference>
<dbReference type="PANTHER" id="PTHR21272">
    <property type="entry name" value="CATABOLIC 3-DEHYDROQUINASE"/>
    <property type="match status" value="1"/>
</dbReference>
<dbReference type="PANTHER" id="PTHR21272:SF3">
    <property type="entry name" value="CATABOLIC 3-DEHYDROQUINASE"/>
    <property type="match status" value="1"/>
</dbReference>
<dbReference type="Pfam" id="PF01220">
    <property type="entry name" value="DHquinase_II"/>
    <property type="match status" value="1"/>
</dbReference>
<dbReference type="PIRSF" id="PIRSF001399">
    <property type="entry name" value="DHquinase_II"/>
    <property type="match status" value="1"/>
</dbReference>
<dbReference type="SUPFAM" id="SSF52304">
    <property type="entry name" value="Type II 3-dehydroquinate dehydratase"/>
    <property type="match status" value="1"/>
</dbReference>
<dbReference type="PROSITE" id="PS01029">
    <property type="entry name" value="DEHYDROQUINASE_II"/>
    <property type="match status" value="1"/>
</dbReference>
<reference key="1">
    <citation type="journal article" date="2008" name="Proc. Natl. Acad. Sci. U.S.A.">
        <title>Niche adaptation and genome expansion in the chlorophyll d-producing cyanobacterium Acaryochloris marina.</title>
        <authorList>
            <person name="Swingley W.D."/>
            <person name="Chen M."/>
            <person name="Cheung P.C."/>
            <person name="Conrad A.L."/>
            <person name="Dejesa L.C."/>
            <person name="Hao J."/>
            <person name="Honchak B.M."/>
            <person name="Karbach L.E."/>
            <person name="Kurdoglu A."/>
            <person name="Lahiri S."/>
            <person name="Mastrian S.D."/>
            <person name="Miyashita H."/>
            <person name="Page L."/>
            <person name="Ramakrishna P."/>
            <person name="Satoh S."/>
            <person name="Sattley W.M."/>
            <person name="Shimada Y."/>
            <person name="Taylor H.L."/>
            <person name="Tomo T."/>
            <person name="Tsuchiya T."/>
            <person name="Wang Z.T."/>
            <person name="Raymond J."/>
            <person name="Mimuro M."/>
            <person name="Blankenship R.E."/>
            <person name="Touchman J.W."/>
        </authorList>
    </citation>
    <scope>NUCLEOTIDE SEQUENCE [LARGE SCALE GENOMIC DNA]</scope>
    <source>
        <strain>MBIC 11017</strain>
    </source>
</reference>
<accession>B0CEJ4</accession>
<gene>
    <name evidence="1" type="primary">aroQ</name>
    <name type="ordered locus">AM1_1943</name>
</gene>